<accession>Q6FRZ8</accession>
<name>AP1_CANGA</name>
<organism>
    <name type="scientific">Candida glabrata (strain ATCC 2001 / BCRC 20586 / JCM 3761 / NBRC 0622 / NRRL Y-65 / CBS 138)</name>
    <name type="common">Yeast</name>
    <name type="synonym">Nakaseomyces glabratus</name>
    <dbReference type="NCBI Taxonomy" id="284593"/>
    <lineage>
        <taxon>Eukaryota</taxon>
        <taxon>Fungi</taxon>
        <taxon>Dikarya</taxon>
        <taxon>Ascomycota</taxon>
        <taxon>Saccharomycotina</taxon>
        <taxon>Saccharomycetes</taxon>
        <taxon>Saccharomycetales</taxon>
        <taxon>Saccharomycetaceae</taxon>
        <taxon>Nakaseomyces</taxon>
    </lineage>
</organism>
<proteinExistence type="inferred from homology"/>
<dbReference type="EMBL" id="CR380954">
    <property type="protein sequence ID" value="CAG59929.1"/>
    <property type="molecule type" value="Genomic_DNA"/>
</dbReference>
<dbReference type="RefSeq" id="XP_446996.1">
    <property type="nucleotide sequence ID" value="XM_446996.1"/>
</dbReference>
<dbReference type="SMR" id="Q6FRZ8"/>
<dbReference type="FunCoup" id="Q6FRZ8">
    <property type="interactions" value="4239"/>
</dbReference>
<dbReference type="STRING" id="284593.Q6FRZ8"/>
<dbReference type="EnsemblFungi" id="CAGL0H04631g-T">
    <property type="protein sequence ID" value="CAGL0H04631g-T-p1"/>
    <property type="gene ID" value="CAGL0H04631g"/>
</dbReference>
<dbReference type="GeneID" id="2888604"/>
<dbReference type="KEGG" id="cgr:2888604"/>
<dbReference type="CGD" id="CAL0130344">
    <property type="gene designation" value="AP1"/>
</dbReference>
<dbReference type="VEuPathDB" id="FungiDB:B1J91_H04631g"/>
<dbReference type="VEuPathDB" id="FungiDB:CAGL0H04631g"/>
<dbReference type="eggNOG" id="ENOG502RPD7">
    <property type="taxonomic scope" value="Eukaryota"/>
</dbReference>
<dbReference type="HOGENOM" id="CLU_032750_0_0_1"/>
<dbReference type="InParanoid" id="Q6FRZ8"/>
<dbReference type="OMA" id="VSTFCAK"/>
<dbReference type="Proteomes" id="UP000002428">
    <property type="component" value="Chromosome H"/>
</dbReference>
<dbReference type="GO" id="GO:0005737">
    <property type="term" value="C:cytoplasm"/>
    <property type="evidence" value="ECO:0000314"/>
    <property type="project" value="CGD"/>
</dbReference>
<dbReference type="GO" id="GO:0005634">
    <property type="term" value="C:nucleus"/>
    <property type="evidence" value="ECO:0000314"/>
    <property type="project" value="CGD"/>
</dbReference>
<dbReference type="GO" id="GO:0090575">
    <property type="term" value="C:RNA polymerase II transcription regulator complex"/>
    <property type="evidence" value="ECO:0007669"/>
    <property type="project" value="TreeGrafter"/>
</dbReference>
<dbReference type="GO" id="GO:0001228">
    <property type="term" value="F:DNA-binding transcription activator activity, RNA polymerase II-specific"/>
    <property type="evidence" value="ECO:0007669"/>
    <property type="project" value="TreeGrafter"/>
</dbReference>
<dbReference type="GO" id="GO:0003700">
    <property type="term" value="F:DNA-binding transcription factor activity"/>
    <property type="evidence" value="ECO:0000316"/>
    <property type="project" value="CGD"/>
</dbReference>
<dbReference type="GO" id="GO:0000976">
    <property type="term" value="F:transcription cis-regulatory region binding"/>
    <property type="evidence" value="ECO:0000314"/>
    <property type="project" value="CGD"/>
</dbReference>
<dbReference type="GO" id="GO:0034599">
    <property type="term" value="P:cellular response to oxidative stress"/>
    <property type="evidence" value="ECO:0000315"/>
    <property type="project" value="CGD"/>
</dbReference>
<dbReference type="GO" id="GO:1900101">
    <property type="term" value="P:regulation of endoplasmic reticulum unfolded protein response"/>
    <property type="evidence" value="ECO:0007669"/>
    <property type="project" value="EnsemblFungi"/>
</dbReference>
<dbReference type="GO" id="GO:0009408">
    <property type="term" value="P:response to heat"/>
    <property type="evidence" value="ECO:0007669"/>
    <property type="project" value="EnsemblFungi"/>
</dbReference>
<dbReference type="GO" id="GO:0000304">
    <property type="term" value="P:response to singlet oxygen"/>
    <property type="evidence" value="ECO:0007669"/>
    <property type="project" value="EnsemblFungi"/>
</dbReference>
<dbReference type="CDD" id="cd14688">
    <property type="entry name" value="bZIP_YAP"/>
    <property type="match status" value="1"/>
</dbReference>
<dbReference type="FunFam" id="1.10.238.100:FF:000002">
    <property type="entry name" value="AP-1-like transcription factor"/>
    <property type="match status" value="1"/>
</dbReference>
<dbReference type="FunFam" id="1.20.5.170:FF:000067">
    <property type="entry name" value="BZIP transcription factor"/>
    <property type="match status" value="1"/>
</dbReference>
<dbReference type="Gene3D" id="1.20.5.170">
    <property type="match status" value="1"/>
</dbReference>
<dbReference type="Gene3D" id="1.10.238.100">
    <property type="entry name" value="YAP1 redox domain. Chain B"/>
    <property type="match status" value="1"/>
</dbReference>
<dbReference type="InterPro" id="IPR050936">
    <property type="entry name" value="AP-1-like"/>
</dbReference>
<dbReference type="InterPro" id="IPR004827">
    <property type="entry name" value="bZIP"/>
</dbReference>
<dbReference type="InterPro" id="IPR046347">
    <property type="entry name" value="bZIP_sf"/>
</dbReference>
<dbReference type="InterPro" id="IPR013910">
    <property type="entry name" value="TF_PAP1"/>
</dbReference>
<dbReference type="InterPro" id="IPR023167">
    <property type="entry name" value="Yap1_redox_dom_sf"/>
</dbReference>
<dbReference type="PANTHER" id="PTHR40621:SF6">
    <property type="entry name" value="AP-1-LIKE TRANSCRIPTION FACTOR YAP1-RELATED"/>
    <property type="match status" value="1"/>
</dbReference>
<dbReference type="PANTHER" id="PTHR40621">
    <property type="entry name" value="TRANSCRIPTION FACTOR KAPC-RELATED"/>
    <property type="match status" value="1"/>
</dbReference>
<dbReference type="Pfam" id="PF08601">
    <property type="entry name" value="PAP1"/>
    <property type="match status" value="1"/>
</dbReference>
<dbReference type="SMART" id="SM00338">
    <property type="entry name" value="BRLZ"/>
    <property type="match status" value="1"/>
</dbReference>
<dbReference type="SUPFAM" id="SSF57959">
    <property type="entry name" value="Leucine zipper domain"/>
    <property type="match status" value="1"/>
</dbReference>
<dbReference type="SUPFAM" id="SSF111430">
    <property type="entry name" value="YAP1 redox domain"/>
    <property type="match status" value="1"/>
</dbReference>
<dbReference type="PROSITE" id="PS50217">
    <property type="entry name" value="BZIP"/>
    <property type="match status" value="1"/>
</dbReference>
<dbReference type="PROSITE" id="PS00036">
    <property type="entry name" value="BZIP_BASIC"/>
    <property type="match status" value="1"/>
</dbReference>
<evidence type="ECO:0000250" key="1">
    <source>
        <dbReference type="UniProtKB" id="P19880"/>
    </source>
</evidence>
<evidence type="ECO:0000255" key="2">
    <source>
        <dbReference type="PROSITE-ProRule" id="PRU00978"/>
    </source>
</evidence>
<evidence type="ECO:0000256" key="3">
    <source>
        <dbReference type="SAM" id="MobiDB-lite"/>
    </source>
</evidence>
<evidence type="ECO:0000269" key="4">
    <source>
    </source>
</evidence>
<evidence type="ECO:0000303" key="5">
    <source>
    </source>
</evidence>
<comment type="function">
    <text evidence="4">Transcription factor that plays a critical role in response to various stresses and reduces the stress through transcriptional activation of its target genes including multidrug transporter FLR1 (PubMed:17046176).</text>
</comment>
<comment type="subcellular location">
    <subcellularLocation>
        <location evidence="2">Nucleus</location>
    </subcellularLocation>
</comment>
<comment type="domain">
    <text evidence="1">Contains two cysteine rich domains (CRD), referred to as the N- and C-terminal CRD's, n-CRD and c-CRD, respectively (By similarity). A nuclear export signal is embedded in the c-CRD, with which the nuclear export protein CRM1/exportin 1 interacts only in the absence of disulfide bonds (or otherwise oxidized cysteines) within the c-CRD or between the c-CRD and the n-CRD (By similarity).</text>
</comment>
<comment type="disruption phenotype">
    <text evidence="4">Leads to decreased resistance to hydrogen peroxide, 4-nitroquinoline-N-oxide (4-NQO), benomyl, and cadmium chloride (PubMed:17046176).</text>
</comment>
<protein>
    <recommendedName>
        <fullName evidence="5">bZip transcription factor GAP1</fullName>
    </recommendedName>
</protein>
<sequence>MAEVDNGGAQKSSASRKKRYQELDPETRMKRVAQNRAAQKAFRERKERKMKELERKVVDLENLTKLNEVETNFLRDQLSILVKELRKYRPETKQDHKVLKYLEKHKGGAAGAGNGAATGSVSTSTRHTDLAASNANRVSKDSSILPGAKIIRQDLESFNENRHFNVTGQLTPPGNTSSSTTANSVAANAKKQSIPHSDSSDSNESKNTWNTDPTSSEDWLDDVMTSHKQISRGQSGSGIDFNNFFDEQVSEFCTKLNQACGTKACPIPQSKSAATTPLPGTSSNGNSNSPMIINDTMGDVSLNMQGNEHGNATNNLVTDPAFLSNTWDDMSPASNQHSTGGAPGFGQLGFGDNLLGNDILFSPNSPAYSPSVLGSGRTQEVYRSPAVQKVVEKENESKSVNFPFINSSLAFPGDYDNNFFRETTDLNFDDNDQDDNFTNSNDLVNDYFTTNIPDTDNSDSALIANGLVKEEPSMQTEDTFKVQNTNDMLNSSRMKETIDNQNIGEKTTKDDNEDDDEDDENDNTVVPSRDDGLLRCSEIWDRITAHPKYSDIDIDGLCSELMAKAKCSERGVVINADDVQVALNKHMS</sequence>
<feature type="chain" id="PRO_0000443418" description="bZip transcription factor GAP1">
    <location>
        <begin position="1"/>
        <end position="588"/>
    </location>
</feature>
<feature type="domain" description="bZIP" evidence="2">
    <location>
        <begin position="25"/>
        <end position="88"/>
    </location>
</feature>
<feature type="region of interest" description="Disordered" evidence="3">
    <location>
        <begin position="1"/>
        <end position="49"/>
    </location>
</feature>
<feature type="region of interest" description="Basic motif" evidence="2">
    <location>
        <begin position="28"/>
        <end position="51"/>
    </location>
</feature>
<feature type="region of interest" description="Leucine-zipper" evidence="2">
    <location>
        <begin position="53"/>
        <end position="60"/>
    </location>
</feature>
<feature type="region of interest" description="Disordered" evidence="3">
    <location>
        <begin position="164"/>
        <end position="219"/>
    </location>
</feature>
<feature type="region of interest" description="Transcription activation 1" evidence="1">
    <location>
        <begin position="189"/>
        <end position="327"/>
    </location>
</feature>
<feature type="region of interest" description="n-CRD" evidence="1">
    <location>
        <begin position="253"/>
        <end position="265"/>
    </location>
</feature>
<feature type="region of interest" description="Transcription activation 2" evidence="1">
    <location>
        <begin position="376"/>
        <end position="477"/>
    </location>
</feature>
<feature type="region of interest" description="Disordered" evidence="3">
    <location>
        <begin position="487"/>
        <end position="529"/>
    </location>
</feature>
<feature type="region of interest" description="c-CRD" evidence="1">
    <location>
        <begin position="536"/>
        <end position="567"/>
    </location>
</feature>
<feature type="short sequence motif" description="Nuclear export signal" evidence="1">
    <location>
        <begin position="552"/>
        <end position="559"/>
    </location>
</feature>
<feature type="compositionally biased region" description="Basic and acidic residues" evidence="3">
    <location>
        <begin position="20"/>
        <end position="29"/>
    </location>
</feature>
<feature type="compositionally biased region" description="Polar residues" evidence="3">
    <location>
        <begin position="164"/>
        <end position="174"/>
    </location>
</feature>
<feature type="compositionally biased region" description="Low complexity" evidence="3">
    <location>
        <begin position="175"/>
        <end position="189"/>
    </location>
</feature>
<feature type="compositionally biased region" description="Polar residues" evidence="3">
    <location>
        <begin position="190"/>
        <end position="217"/>
    </location>
</feature>
<feature type="compositionally biased region" description="Acidic residues" evidence="3">
    <location>
        <begin position="511"/>
        <end position="522"/>
    </location>
</feature>
<keyword id="KW-0238">DNA-binding</keyword>
<keyword id="KW-0539">Nucleus</keyword>
<keyword id="KW-1185">Reference proteome</keyword>
<keyword id="KW-0804">Transcription</keyword>
<keyword id="KW-0805">Transcription regulation</keyword>
<reference key="1">
    <citation type="journal article" date="2004" name="Nature">
        <title>Genome evolution in yeasts.</title>
        <authorList>
            <person name="Dujon B."/>
            <person name="Sherman D."/>
            <person name="Fischer G."/>
            <person name="Durrens P."/>
            <person name="Casaregola S."/>
            <person name="Lafontaine I."/>
            <person name="de Montigny J."/>
            <person name="Marck C."/>
            <person name="Neuveglise C."/>
            <person name="Talla E."/>
            <person name="Goffard N."/>
            <person name="Frangeul L."/>
            <person name="Aigle M."/>
            <person name="Anthouard V."/>
            <person name="Babour A."/>
            <person name="Barbe V."/>
            <person name="Barnay S."/>
            <person name="Blanchin S."/>
            <person name="Beckerich J.-M."/>
            <person name="Beyne E."/>
            <person name="Bleykasten C."/>
            <person name="Boisrame A."/>
            <person name="Boyer J."/>
            <person name="Cattolico L."/>
            <person name="Confanioleri F."/>
            <person name="de Daruvar A."/>
            <person name="Despons L."/>
            <person name="Fabre E."/>
            <person name="Fairhead C."/>
            <person name="Ferry-Dumazet H."/>
            <person name="Groppi A."/>
            <person name="Hantraye F."/>
            <person name="Hennequin C."/>
            <person name="Jauniaux N."/>
            <person name="Joyet P."/>
            <person name="Kachouri R."/>
            <person name="Kerrest A."/>
            <person name="Koszul R."/>
            <person name="Lemaire M."/>
            <person name="Lesur I."/>
            <person name="Ma L."/>
            <person name="Muller H."/>
            <person name="Nicaud J.-M."/>
            <person name="Nikolski M."/>
            <person name="Oztas S."/>
            <person name="Ozier-Kalogeropoulos O."/>
            <person name="Pellenz S."/>
            <person name="Potier S."/>
            <person name="Richard G.-F."/>
            <person name="Straub M.-L."/>
            <person name="Suleau A."/>
            <person name="Swennen D."/>
            <person name="Tekaia F."/>
            <person name="Wesolowski-Louvel M."/>
            <person name="Westhof E."/>
            <person name="Wirth B."/>
            <person name="Zeniou-Meyer M."/>
            <person name="Zivanovic Y."/>
            <person name="Bolotin-Fukuhara M."/>
            <person name="Thierry A."/>
            <person name="Bouchier C."/>
            <person name="Caudron B."/>
            <person name="Scarpelli C."/>
            <person name="Gaillardin C."/>
            <person name="Weissenbach J."/>
            <person name="Wincker P."/>
            <person name="Souciet J.-L."/>
        </authorList>
    </citation>
    <scope>NUCLEOTIDE SEQUENCE [LARGE SCALE GENOMIC DNA]</scope>
    <source>
        <strain>ATCC 2001 / BCRC 20586 / JCM 3761 / NBRC 0622 / NRRL Y-65 / CBS 138</strain>
    </source>
</reference>
<reference key="2">
    <citation type="journal article" date="2007" name="Gene">
        <title>The bZip transcription factor Cgap1p is involved in multidrug resistance and required for activation of multidrug transporter gene CgFLR1 in Candida glabrata.</title>
        <authorList>
            <person name="Chen K.H."/>
            <person name="Miyazaki T."/>
            <person name="Tsai H.F."/>
            <person name="Bennett J.E."/>
        </authorList>
    </citation>
    <scope>DISRUPTION PHENOTYPE</scope>
    <scope>FUNCTION</scope>
</reference>
<gene>
    <name evidence="5" type="primary">AP1</name>
    <name type="ordered locus">CAGL0H04631g</name>
</gene>